<evidence type="ECO:0000255" key="1">
    <source>
        <dbReference type="HAMAP-Rule" id="MF_01861"/>
    </source>
</evidence>
<comment type="similarity">
    <text evidence="1">Belongs to the UPF0738 family.</text>
</comment>
<sequence>MQNKIQVKSVEKRENALIFCAENNEIEVKELSARNHVLVDSDNLSFLYILENESSFIYVSIPHTCWEAMHEAMNNDIVMFVRVNDVEMELENLKEEVEYLVENIEGNANYGEELVTAVEKVFL</sequence>
<dbReference type="EMBL" id="CP001186">
    <property type="protein sequence ID" value="ACK98241.1"/>
    <property type="molecule type" value="Genomic_DNA"/>
</dbReference>
<dbReference type="RefSeq" id="WP_001179996.1">
    <property type="nucleotide sequence ID" value="NC_011772.1"/>
</dbReference>
<dbReference type="KEGG" id="bcg:BCG9842_B4089"/>
<dbReference type="HOGENOM" id="CLU_142282_0_0_9"/>
<dbReference type="Proteomes" id="UP000006744">
    <property type="component" value="Chromosome"/>
</dbReference>
<dbReference type="HAMAP" id="MF_01861">
    <property type="entry name" value="UPF0738"/>
    <property type="match status" value="1"/>
</dbReference>
<dbReference type="InterPro" id="IPR020908">
    <property type="entry name" value="UPF0738"/>
</dbReference>
<dbReference type="Pfam" id="PF19785">
    <property type="entry name" value="UPF0738"/>
    <property type="match status" value="1"/>
</dbReference>
<organism>
    <name type="scientific">Bacillus cereus (strain G9842)</name>
    <dbReference type="NCBI Taxonomy" id="405531"/>
    <lineage>
        <taxon>Bacteria</taxon>
        <taxon>Bacillati</taxon>
        <taxon>Bacillota</taxon>
        <taxon>Bacilli</taxon>
        <taxon>Bacillales</taxon>
        <taxon>Bacillaceae</taxon>
        <taxon>Bacillus</taxon>
        <taxon>Bacillus cereus group</taxon>
    </lineage>
</organism>
<gene>
    <name type="ordered locus">BCG9842_B4089</name>
</gene>
<protein>
    <recommendedName>
        <fullName evidence="1">UPF0738 protein BCG9842_B4089</fullName>
    </recommendedName>
</protein>
<proteinExistence type="inferred from homology"/>
<reference key="1">
    <citation type="submission" date="2008-10" db="EMBL/GenBank/DDBJ databases">
        <title>Genome sequence of Bacillus cereus G9842.</title>
        <authorList>
            <person name="Dodson R.J."/>
            <person name="Durkin A.S."/>
            <person name="Rosovitz M.J."/>
            <person name="Rasko D.A."/>
            <person name="Hoffmaster A."/>
            <person name="Ravel J."/>
            <person name="Sutton G."/>
        </authorList>
    </citation>
    <scope>NUCLEOTIDE SEQUENCE [LARGE SCALE GENOMIC DNA]</scope>
    <source>
        <strain>G9842</strain>
    </source>
</reference>
<accession>B7ILE3</accession>
<name>Y4089_BACC2</name>
<feature type="chain" id="PRO_0000369643" description="UPF0738 protein BCG9842_B4089">
    <location>
        <begin position="1"/>
        <end position="123"/>
    </location>
</feature>